<gene>
    <name type="primary">N</name>
    <name type="synonym">I</name>
    <name type="ORF">7b</name>
</gene>
<comment type="function">
    <text evidence="1">Structural protein that is not essential for the viral replication either in tissue culture or in its natural host.</text>
</comment>
<comment type="subcellular location">
    <subcellularLocation>
        <location evidence="1">Virion</location>
    </subcellularLocation>
</comment>
<comment type="miscellaneous">
    <text>The gene encoding this protein is included within the N gene (alternative ORF).</text>
</comment>
<comment type="similarity">
    <text evidence="2">Belongs to the coronavirus I protein family.</text>
</comment>
<keyword id="KW-0946">Virion</keyword>
<organismHost>
    <name type="scientific">Mus musculus</name>
    <name type="common">Mouse</name>
    <dbReference type="NCBI Taxonomy" id="10090"/>
</organismHost>
<feature type="chain" id="PRO_0000106123" description="Protein I">
    <location>
        <begin position="1"/>
        <end position="207"/>
    </location>
</feature>
<reference key="1">
    <citation type="journal article" date="1990" name="Virology">
        <title>Sequence comparison of the N genes of five strains of the coronavirus mouse hepatitis virus suggests a three domain structure for the nucleocapsid protein.</title>
        <authorList>
            <person name="Parker M.M."/>
            <person name="Masters P.S."/>
        </authorList>
    </citation>
    <scope>NUCLEOTIDE SEQUENCE [GENOMIC RNA]</scope>
</reference>
<accession>P69615</accession>
<accession>P18453</accession>
<accession>P18456</accession>
<protein>
    <recommendedName>
        <fullName>Protein I</fullName>
    </recommendedName>
    <alternativeName>
        <fullName>Accessory protein N2</fullName>
    </alternativeName>
    <alternativeName>
        <fullName>N internal ORF protein</fullName>
        <shortName>IORF</shortName>
    </alternativeName>
    <alternativeName>
        <fullName>Protein in nucleocapsid ORF</fullName>
    </alternativeName>
</protein>
<sequence length="207" mass="22617">MESSRRPLGLTKPSVDQIIKIEAEGISQSRLQLLNPTPGVWFPITPGFLALPSSKRERSFSLQKDKECLLPMESPLQSKRDIGIDTTAVLLKHLMGSRSNYCPDGIFTILAQGPMLEPVMETALKESSGLQTAKRTPIPALILSKGTQAVMRLFLLGLRPARYCLRAFMLKALEGLHLLADLVRGHNPVGQIIALEAVPTSASLPLL</sequence>
<name>IORF_CVM3</name>
<organism>
    <name type="scientific">Murine coronavirus (strain 3)</name>
    <name type="common">MHV-3</name>
    <name type="synonym">Murine hepatitis virus</name>
    <dbReference type="NCBI Taxonomy" id="11140"/>
    <lineage>
        <taxon>Viruses</taxon>
        <taxon>Riboviria</taxon>
        <taxon>Orthornavirae</taxon>
        <taxon>Pisuviricota</taxon>
        <taxon>Pisoniviricetes</taxon>
        <taxon>Nidovirales</taxon>
        <taxon>Cornidovirineae</taxon>
        <taxon>Coronaviridae</taxon>
        <taxon>Orthocoronavirinae</taxon>
        <taxon>Betacoronavirus</taxon>
        <taxon>Embecovirus</taxon>
        <taxon>Murine coronavirus</taxon>
    </lineage>
</organism>
<dbReference type="EMBL" id="M35254">
    <property type="protein sequence ID" value="AAA46445.1"/>
    <property type="molecule type" value="Genomic_RNA"/>
</dbReference>
<dbReference type="PIR" id="F45340">
    <property type="entry name" value="F45340"/>
</dbReference>
<dbReference type="GO" id="GO:0044423">
    <property type="term" value="C:virion component"/>
    <property type="evidence" value="ECO:0007669"/>
    <property type="project" value="UniProtKB-KW"/>
</dbReference>
<dbReference type="CDD" id="cd21662">
    <property type="entry name" value="embe-CoV_Protein-I_like"/>
    <property type="match status" value="1"/>
</dbReference>
<dbReference type="InterPro" id="IPR004876">
    <property type="entry name" value="Corona_nucI"/>
</dbReference>
<dbReference type="InterPro" id="IPR044311">
    <property type="entry name" value="N2-like_embe-CoV"/>
</dbReference>
<dbReference type="Pfam" id="PF03187">
    <property type="entry name" value="Corona_I"/>
    <property type="match status" value="1"/>
</dbReference>
<proteinExistence type="inferred from homology"/>
<evidence type="ECO:0000250" key="1"/>
<evidence type="ECO:0000305" key="2"/>